<protein>
    <recommendedName>
        <fullName evidence="1">UvrABC system protein B</fullName>
        <shortName evidence="1">Protein UvrB</shortName>
    </recommendedName>
    <alternativeName>
        <fullName evidence="1">Excinuclease ABC subunit B</fullName>
    </alternativeName>
</protein>
<comment type="function">
    <text evidence="1">The UvrABC repair system catalyzes the recognition and processing of DNA lesions. A damage recognition complex composed of 2 UvrA and 2 UvrB subunits scans DNA for abnormalities. Upon binding of the UvrA(2)B(2) complex to a putative damaged site, the DNA wraps around one UvrB monomer. DNA wrap is dependent on ATP binding by UvrB and probably causes local melting of the DNA helix, facilitating insertion of UvrB beta-hairpin between the DNA strands. Then UvrB probes one DNA strand for the presence of a lesion. If a lesion is found the UvrA subunits dissociate and the UvrB-DNA preincision complex is formed. This complex is subsequently bound by UvrC and the second UvrB is released. If no lesion is found, the DNA wraps around the other UvrB subunit that will check the other stand for damage.</text>
</comment>
<comment type="subunit">
    <text evidence="1">Forms a heterotetramer with UvrA during the search for lesions. Interacts with UvrC in an incision complex.</text>
</comment>
<comment type="subcellular location">
    <subcellularLocation>
        <location evidence="1">Cytoplasm</location>
    </subcellularLocation>
</comment>
<comment type="domain">
    <text evidence="1">The beta-hairpin motif is involved in DNA binding.</text>
</comment>
<comment type="similarity">
    <text evidence="1">Belongs to the UvrB family.</text>
</comment>
<dbReference type="EMBL" id="CP000857">
    <property type="protein sequence ID" value="ACN44969.1"/>
    <property type="molecule type" value="Genomic_DNA"/>
</dbReference>
<dbReference type="RefSeq" id="WP_000042502.1">
    <property type="nucleotide sequence ID" value="NC_012125.1"/>
</dbReference>
<dbReference type="SMR" id="C0PWY7"/>
<dbReference type="KEGG" id="sei:SPC_0795"/>
<dbReference type="HOGENOM" id="CLU_009621_2_1_6"/>
<dbReference type="Proteomes" id="UP000001599">
    <property type="component" value="Chromosome"/>
</dbReference>
<dbReference type="GO" id="GO:0005737">
    <property type="term" value="C:cytoplasm"/>
    <property type="evidence" value="ECO:0007669"/>
    <property type="project" value="UniProtKB-SubCell"/>
</dbReference>
<dbReference type="GO" id="GO:0009380">
    <property type="term" value="C:excinuclease repair complex"/>
    <property type="evidence" value="ECO:0007669"/>
    <property type="project" value="InterPro"/>
</dbReference>
<dbReference type="GO" id="GO:0005524">
    <property type="term" value="F:ATP binding"/>
    <property type="evidence" value="ECO:0007669"/>
    <property type="project" value="UniProtKB-UniRule"/>
</dbReference>
<dbReference type="GO" id="GO:0016887">
    <property type="term" value="F:ATP hydrolysis activity"/>
    <property type="evidence" value="ECO:0007669"/>
    <property type="project" value="InterPro"/>
</dbReference>
<dbReference type="GO" id="GO:0003677">
    <property type="term" value="F:DNA binding"/>
    <property type="evidence" value="ECO:0007669"/>
    <property type="project" value="UniProtKB-UniRule"/>
</dbReference>
<dbReference type="GO" id="GO:0009381">
    <property type="term" value="F:excinuclease ABC activity"/>
    <property type="evidence" value="ECO:0007669"/>
    <property type="project" value="UniProtKB-UniRule"/>
</dbReference>
<dbReference type="GO" id="GO:0004386">
    <property type="term" value="F:helicase activity"/>
    <property type="evidence" value="ECO:0007669"/>
    <property type="project" value="UniProtKB-KW"/>
</dbReference>
<dbReference type="GO" id="GO:0006289">
    <property type="term" value="P:nucleotide-excision repair"/>
    <property type="evidence" value="ECO:0007669"/>
    <property type="project" value="UniProtKB-UniRule"/>
</dbReference>
<dbReference type="GO" id="GO:0009432">
    <property type="term" value="P:SOS response"/>
    <property type="evidence" value="ECO:0007669"/>
    <property type="project" value="UniProtKB-UniRule"/>
</dbReference>
<dbReference type="CDD" id="cd17916">
    <property type="entry name" value="DEXHc_UvrB"/>
    <property type="match status" value="1"/>
</dbReference>
<dbReference type="CDD" id="cd18790">
    <property type="entry name" value="SF2_C_UvrB"/>
    <property type="match status" value="1"/>
</dbReference>
<dbReference type="FunFam" id="3.40.50.300:FF:000257">
    <property type="entry name" value="UvrABC system protein B"/>
    <property type="match status" value="1"/>
</dbReference>
<dbReference type="FunFam" id="3.40.50.300:FF:000401">
    <property type="entry name" value="UvrABC system protein B"/>
    <property type="match status" value="1"/>
</dbReference>
<dbReference type="FunFam" id="3.40.50.300:FF:000477">
    <property type="entry name" value="UvrABC system protein B"/>
    <property type="match status" value="1"/>
</dbReference>
<dbReference type="Gene3D" id="6.10.140.240">
    <property type="match status" value="1"/>
</dbReference>
<dbReference type="Gene3D" id="3.40.50.300">
    <property type="entry name" value="P-loop containing nucleotide triphosphate hydrolases"/>
    <property type="match status" value="3"/>
</dbReference>
<dbReference type="Gene3D" id="4.10.860.10">
    <property type="entry name" value="UVR domain"/>
    <property type="match status" value="1"/>
</dbReference>
<dbReference type="HAMAP" id="MF_00204">
    <property type="entry name" value="UvrB"/>
    <property type="match status" value="1"/>
</dbReference>
<dbReference type="InterPro" id="IPR006935">
    <property type="entry name" value="Helicase/UvrB_N"/>
</dbReference>
<dbReference type="InterPro" id="IPR014001">
    <property type="entry name" value="Helicase_ATP-bd"/>
</dbReference>
<dbReference type="InterPro" id="IPR001650">
    <property type="entry name" value="Helicase_C-like"/>
</dbReference>
<dbReference type="InterPro" id="IPR027417">
    <property type="entry name" value="P-loop_NTPase"/>
</dbReference>
<dbReference type="InterPro" id="IPR001943">
    <property type="entry name" value="UVR_dom"/>
</dbReference>
<dbReference type="InterPro" id="IPR036876">
    <property type="entry name" value="UVR_dom_sf"/>
</dbReference>
<dbReference type="InterPro" id="IPR004807">
    <property type="entry name" value="UvrB"/>
</dbReference>
<dbReference type="InterPro" id="IPR041471">
    <property type="entry name" value="UvrB_inter"/>
</dbReference>
<dbReference type="InterPro" id="IPR024759">
    <property type="entry name" value="UvrB_YAD/RRR_dom"/>
</dbReference>
<dbReference type="NCBIfam" id="NF003673">
    <property type="entry name" value="PRK05298.1"/>
    <property type="match status" value="1"/>
</dbReference>
<dbReference type="NCBIfam" id="TIGR00631">
    <property type="entry name" value="uvrb"/>
    <property type="match status" value="1"/>
</dbReference>
<dbReference type="PANTHER" id="PTHR24029">
    <property type="entry name" value="UVRABC SYSTEM PROTEIN B"/>
    <property type="match status" value="1"/>
</dbReference>
<dbReference type="PANTHER" id="PTHR24029:SF0">
    <property type="entry name" value="UVRABC SYSTEM PROTEIN B"/>
    <property type="match status" value="1"/>
</dbReference>
<dbReference type="Pfam" id="PF00271">
    <property type="entry name" value="Helicase_C"/>
    <property type="match status" value="1"/>
</dbReference>
<dbReference type="Pfam" id="PF04851">
    <property type="entry name" value="ResIII"/>
    <property type="match status" value="1"/>
</dbReference>
<dbReference type="Pfam" id="PF02151">
    <property type="entry name" value="UVR"/>
    <property type="match status" value="1"/>
</dbReference>
<dbReference type="Pfam" id="PF12344">
    <property type="entry name" value="UvrB"/>
    <property type="match status" value="1"/>
</dbReference>
<dbReference type="Pfam" id="PF17757">
    <property type="entry name" value="UvrB_inter"/>
    <property type="match status" value="1"/>
</dbReference>
<dbReference type="SMART" id="SM00487">
    <property type="entry name" value="DEXDc"/>
    <property type="match status" value="1"/>
</dbReference>
<dbReference type="SMART" id="SM00490">
    <property type="entry name" value="HELICc"/>
    <property type="match status" value="1"/>
</dbReference>
<dbReference type="SUPFAM" id="SSF46600">
    <property type="entry name" value="C-terminal UvrC-binding domain of UvrB"/>
    <property type="match status" value="1"/>
</dbReference>
<dbReference type="SUPFAM" id="SSF52540">
    <property type="entry name" value="P-loop containing nucleoside triphosphate hydrolases"/>
    <property type="match status" value="2"/>
</dbReference>
<dbReference type="PROSITE" id="PS51192">
    <property type="entry name" value="HELICASE_ATP_BIND_1"/>
    <property type="match status" value="1"/>
</dbReference>
<dbReference type="PROSITE" id="PS51194">
    <property type="entry name" value="HELICASE_CTER"/>
    <property type="match status" value="1"/>
</dbReference>
<dbReference type="PROSITE" id="PS50151">
    <property type="entry name" value="UVR"/>
    <property type="match status" value="1"/>
</dbReference>
<feature type="chain" id="PRO_1000200551" description="UvrABC system protein B">
    <location>
        <begin position="1"/>
        <end position="673"/>
    </location>
</feature>
<feature type="domain" description="Helicase ATP-binding" evidence="1">
    <location>
        <begin position="26"/>
        <end position="183"/>
    </location>
</feature>
<feature type="domain" description="Helicase C-terminal" evidence="1">
    <location>
        <begin position="431"/>
        <end position="597"/>
    </location>
</feature>
<feature type="domain" description="UVR" evidence="1">
    <location>
        <begin position="633"/>
        <end position="668"/>
    </location>
</feature>
<feature type="short sequence motif" description="Beta-hairpin">
    <location>
        <begin position="92"/>
        <end position="115"/>
    </location>
</feature>
<feature type="binding site" evidence="1">
    <location>
        <begin position="39"/>
        <end position="46"/>
    </location>
    <ligand>
        <name>ATP</name>
        <dbReference type="ChEBI" id="CHEBI:30616"/>
    </ligand>
</feature>
<proteinExistence type="inferred from homology"/>
<organism>
    <name type="scientific">Salmonella paratyphi C (strain RKS4594)</name>
    <dbReference type="NCBI Taxonomy" id="476213"/>
    <lineage>
        <taxon>Bacteria</taxon>
        <taxon>Pseudomonadati</taxon>
        <taxon>Pseudomonadota</taxon>
        <taxon>Gammaproteobacteria</taxon>
        <taxon>Enterobacterales</taxon>
        <taxon>Enterobacteriaceae</taxon>
        <taxon>Salmonella</taxon>
    </lineage>
</organism>
<gene>
    <name evidence="1" type="primary">uvrB</name>
    <name type="ordered locus">SPC_0795</name>
</gene>
<evidence type="ECO:0000255" key="1">
    <source>
        <dbReference type="HAMAP-Rule" id="MF_00204"/>
    </source>
</evidence>
<accession>C0PWY7</accession>
<name>UVRB_SALPC</name>
<keyword id="KW-0067">ATP-binding</keyword>
<keyword id="KW-0963">Cytoplasm</keyword>
<keyword id="KW-0227">DNA damage</keyword>
<keyword id="KW-0228">DNA excision</keyword>
<keyword id="KW-0234">DNA repair</keyword>
<keyword id="KW-0267">Excision nuclease</keyword>
<keyword id="KW-0347">Helicase</keyword>
<keyword id="KW-0378">Hydrolase</keyword>
<keyword id="KW-0547">Nucleotide-binding</keyword>
<keyword id="KW-0742">SOS response</keyword>
<sequence>MSKPFKLNSAFKPSGDQPDAIRRLEEGLEDGLAHQTLLGVTGSGKTFTIANVIADLQRPTMVLAPNKTLAAQLYGEMKEFFPENAVEYFVSYYDYYQPEAYVPSSDTFIEKDASVNEHIEQMRLSATKALLERRDVVVVASVSAIYGLGDPDLYLKMMLHLTVGMLIDQRAILRRLAELQYTRNDQAFQRGTFRVRGEVIDIFPAESDDIALRVELFDEEVERLSLFDPLTGQVESTVPRYTIYPKTHYVTPRERILQAMEEIKDELADRRKVLLANNKLLEEQRLSQRTQFDLEMMNELGYCSGIENYSRFLSGRGPGEPPPTLFDYLPADGLLVVDESHVTIPQIGGMYRGDRARKETLVEYGFRLPSALDNRPLKFEEFEALAPQTIYVSATPGNYELEKSGDEVVDQVVRPTGLLDPIIEVRPVATQVDDLLSEIRQRAAINERVLVTTLTKRMAEDLTEYLEEHGERVRYLHSDIDTVERMEIIRDLRLGEFDVLVGINLLREGLDMPEVSLVAILDADKEGFLRSERSLIQTIGRAARNVNGKAILYGDKITPSMAKAIGETERRREKQQKYNEEHGITPQGLNKKVVDILALGQNIAKTKAKGKGKGRSTAKAGIVELDMTPKALQQKIHELEGQMMQHAQNLEFEEAAQIRDQLHQLRELFIAAS</sequence>
<reference key="1">
    <citation type="journal article" date="2009" name="PLoS ONE">
        <title>Salmonella paratyphi C: genetic divergence from Salmonella choleraesuis and pathogenic convergence with Salmonella typhi.</title>
        <authorList>
            <person name="Liu W.-Q."/>
            <person name="Feng Y."/>
            <person name="Wang Y."/>
            <person name="Zou Q.-H."/>
            <person name="Chen F."/>
            <person name="Guo J.-T."/>
            <person name="Peng Y.-H."/>
            <person name="Jin Y."/>
            <person name="Li Y.-G."/>
            <person name="Hu S.-N."/>
            <person name="Johnston R.N."/>
            <person name="Liu G.-R."/>
            <person name="Liu S.-L."/>
        </authorList>
    </citation>
    <scope>NUCLEOTIDE SEQUENCE [LARGE SCALE GENOMIC DNA]</scope>
    <source>
        <strain>RKS4594</strain>
    </source>
</reference>